<evidence type="ECO:0000255" key="1">
    <source>
        <dbReference type="HAMAP-Rule" id="MF_00298"/>
    </source>
</evidence>
<evidence type="ECO:0000256" key="2">
    <source>
        <dbReference type="SAM" id="MobiDB-lite"/>
    </source>
</evidence>
<name>RPPH_JANMA</name>
<reference key="1">
    <citation type="journal article" date="2007" name="PLoS Genet.">
        <title>Genome analysis of Minibacterium massiliensis highlights the convergent evolution of water-living bacteria.</title>
        <authorList>
            <person name="Audic S."/>
            <person name="Robert C."/>
            <person name="Campagna B."/>
            <person name="Parinello H."/>
            <person name="Claverie J.-M."/>
            <person name="Raoult D."/>
            <person name="Drancourt M."/>
        </authorList>
    </citation>
    <scope>NUCLEOTIDE SEQUENCE [LARGE SCALE GENOMIC DNA]</scope>
    <source>
        <strain>Marseille</strain>
    </source>
</reference>
<sequence length="194" mass="23542">MLDREGFRPNVGIILINTRNEVWWGKRVREHSWQFPQGGIKFGETPEQAMYRELEEEVGLRAEHVKIIGRTRDWLRYEVPDHFIKREIRGHYKGQKQIWFLLRMVGRDCDVNLRMTEHPEFDAWRWHDYWVPLDVVIEFKRDVYQRALQELSRFLSRPTQHVPPQHNTARYLRQTHASRKPDEPSTEKTKPDNE</sequence>
<keyword id="KW-0378">Hydrolase</keyword>
<dbReference type="EC" id="3.6.1.-" evidence="1"/>
<dbReference type="EMBL" id="CP000269">
    <property type="protein sequence ID" value="ABR91343.1"/>
    <property type="molecule type" value="Genomic_DNA"/>
</dbReference>
<dbReference type="RefSeq" id="WP_012080838.1">
    <property type="nucleotide sequence ID" value="NC_009659.1"/>
</dbReference>
<dbReference type="SMR" id="A6T2D2"/>
<dbReference type="STRING" id="375286.mma_2989"/>
<dbReference type="KEGG" id="mms:mma_2989"/>
<dbReference type="eggNOG" id="COG0494">
    <property type="taxonomic scope" value="Bacteria"/>
</dbReference>
<dbReference type="HOGENOM" id="CLU_087195_3_1_4"/>
<dbReference type="OrthoDB" id="9816040at2"/>
<dbReference type="Proteomes" id="UP000006388">
    <property type="component" value="Chromosome"/>
</dbReference>
<dbReference type="GO" id="GO:0005737">
    <property type="term" value="C:cytoplasm"/>
    <property type="evidence" value="ECO:0007669"/>
    <property type="project" value="TreeGrafter"/>
</dbReference>
<dbReference type="GO" id="GO:0034353">
    <property type="term" value="F:mRNA 5'-diphosphatase activity"/>
    <property type="evidence" value="ECO:0007669"/>
    <property type="project" value="TreeGrafter"/>
</dbReference>
<dbReference type="GO" id="GO:0006402">
    <property type="term" value="P:mRNA catabolic process"/>
    <property type="evidence" value="ECO:0007669"/>
    <property type="project" value="TreeGrafter"/>
</dbReference>
<dbReference type="CDD" id="cd03671">
    <property type="entry name" value="NUDIX_Ap4A_hydrolase_plant_like"/>
    <property type="match status" value="1"/>
</dbReference>
<dbReference type="Gene3D" id="3.90.79.10">
    <property type="entry name" value="Nucleoside Triphosphate Pyrophosphohydrolase"/>
    <property type="match status" value="1"/>
</dbReference>
<dbReference type="HAMAP" id="MF_00298">
    <property type="entry name" value="Nudix_RppH"/>
    <property type="match status" value="1"/>
</dbReference>
<dbReference type="InterPro" id="IPR020476">
    <property type="entry name" value="Nudix_hydrolase"/>
</dbReference>
<dbReference type="InterPro" id="IPR015797">
    <property type="entry name" value="NUDIX_hydrolase-like_dom_sf"/>
</dbReference>
<dbReference type="InterPro" id="IPR020084">
    <property type="entry name" value="NUDIX_hydrolase_CS"/>
</dbReference>
<dbReference type="InterPro" id="IPR000086">
    <property type="entry name" value="NUDIX_hydrolase_dom"/>
</dbReference>
<dbReference type="InterPro" id="IPR022927">
    <property type="entry name" value="RppH"/>
</dbReference>
<dbReference type="NCBIfam" id="NF001935">
    <property type="entry name" value="PRK00714.1-2"/>
    <property type="match status" value="1"/>
</dbReference>
<dbReference type="NCBIfam" id="NF001937">
    <property type="entry name" value="PRK00714.1-4"/>
    <property type="match status" value="1"/>
</dbReference>
<dbReference type="NCBIfam" id="NF001938">
    <property type="entry name" value="PRK00714.1-5"/>
    <property type="match status" value="1"/>
</dbReference>
<dbReference type="PANTHER" id="PTHR23114">
    <property type="entry name" value="M7GPPPN-MRNA HYDROLASE"/>
    <property type="match status" value="1"/>
</dbReference>
<dbReference type="PANTHER" id="PTHR23114:SF17">
    <property type="entry name" value="M7GPPPN-MRNA HYDROLASE"/>
    <property type="match status" value="1"/>
</dbReference>
<dbReference type="Pfam" id="PF00293">
    <property type="entry name" value="NUDIX"/>
    <property type="match status" value="1"/>
</dbReference>
<dbReference type="PRINTS" id="PR00502">
    <property type="entry name" value="NUDIXFAMILY"/>
</dbReference>
<dbReference type="SUPFAM" id="SSF55811">
    <property type="entry name" value="Nudix"/>
    <property type="match status" value="1"/>
</dbReference>
<dbReference type="PROSITE" id="PS51462">
    <property type="entry name" value="NUDIX"/>
    <property type="match status" value="1"/>
</dbReference>
<dbReference type="PROSITE" id="PS00893">
    <property type="entry name" value="NUDIX_BOX"/>
    <property type="match status" value="1"/>
</dbReference>
<organism>
    <name type="scientific">Janthinobacterium sp. (strain Marseille)</name>
    <name type="common">Minibacterium massiliensis</name>
    <dbReference type="NCBI Taxonomy" id="375286"/>
    <lineage>
        <taxon>Bacteria</taxon>
        <taxon>Pseudomonadati</taxon>
        <taxon>Pseudomonadota</taxon>
        <taxon>Betaproteobacteria</taxon>
        <taxon>Burkholderiales</taxon>
        <taxon>Oxalobacteraceae</taxon>
        <taxon>Janthinobacterium</taxon>
    </lineage>
</organism>
<accession>A6T2D2</accession>
<feature type="chain" id="PRO_1000021957" description="RNA pyrophosphohydrolase">
    <location>
        <begin position="1"/>
        <end position="194"/>
    </location>
</feature>
<feature type="domain" description="Nudix hydrolase" evidence="1">
    <location>
        <begin position="6"/>
        <end position="149"/>
    </location>
</feature>
<feature type="region of interest" description="Disordered" evidence="2">
    <location>
        <begin position="158"/>
        <end position="194"/>
    </location>
</feature>
<feature type="short sequence motif" description="Nudix box">
    <location>
        <begin position="38"/>
        <end position="59"/>
    </location>
</feature>
<feature type="compositionally biased region" description="Basic and acidic residues" evidence="2">
    <location>
        <begin position="179"/>
        <end position="194"/>
    </location>
</feature>
<proteinExistence type="inferred from homology"/>
<gene>
    <name evidence="1" type="primary">rppH</name>
    <name evidence="1" type="synonym">nudH</name>
    <name type="ordered locus">mma_2989</name>
</gene>
<protein>
    <recommendedName>
        <fullName evidence="1">RNA pyrophosphohydrolase</fullName>
        <ecNumber evidence="1">3.6.1.-</ecNumber>
    </recommendedName>
    <alternativeName>
        <fullName evidence="1">(Di)nucleoside polyphosphate hydrolase</fullName>
    </alternativeName>
</protein>
<comment type="function">
    <text evidence="1">Accelerates the degradation of transcripts by removing pyrophosphate from the 5'-end of triphosphorylated RNA, leading to a more labile monophosphorylated state that can stimulate subsequent ribonuclease cleavage.</text>
</comment>
<comment type="cofactor">
    <cofactor evidence="1">
        <name>a divalent metal cation</name>
        <dbReference type="ChEBI" id="CHEBI:60240"/>
    </cofactor>
</comment>
<comment type="similarity">
    <text evidence="1">Belongs to the Nudix hydrolase family. RppH subfamily.</text>
</comment>